<reference key="1">
    <citation type="journal article" date="1989" name="J. Bacteriol.">
        <title>Nucleotide sequences of the fecBCDE genes and locations of the proteins suggest a periplasmic-binding-protein-dependent transport mechanism for iron(III) dicitrate in Escherichia coli.</title>
        <authorList>
            <person name="Staudenmaier H."/>
            <person name="van Hove B."/>
            <person name="Yaraghi Z."/>
            <person name="Braun V."/>
        </authorList>
    </citation>
    <scope>NUCLEOTIDE SEQUENCE [GENOMIC DNA]</scope>
    <scope>FUNCTION</scope>
    <scope>SUBUNIT</scope>
    <scope>SUBCELLULAR LOCATION</scope>
    <source>
        <strain>K12</strain>
    </source>
</reference>
<reference key="2">
    <citation type="journal article" date="1995" name="Nucleic Acids Res.">
        <title>Analysis of the Escherichia coli genome VI: DNA sequence of the region from 92.8 through 100 minutes.</title>
        <authorList>
            <person name="Burland V.D."/>
            <person name="Plunkett G. III"/>
            <person name="Sofia H.J."/>
            <person name="Daniels D.L."/>
            <person name="Blattner F.R."/>
        </authorList>
    </citation>
    <scope>NUCLEOTIDE SEQUENCE [LARGE SCALE GENOMIC DNA]</scope>
    <source>
        <strain>K12 / MG1655 / ATCC 47076</strain>
    </source>
</reference>
<reference key="3">
    <citation type="journal article" date="1997" name="Science">
        <title>The complete genome sequence of Escherichia coli K-12.</title>
        <authorList>
            <person name="Blattner F.R."/>
            <person name="Plunkett G. III"/>
            <person name="Bloch C.A."/>
            <person name="Perna N.T."/>
            <person name="Burland V."/>
            <person name="Riley M."/>
            <person name="Collado-Vides J."/>
            <person name="Glasner J.D."/>
            <person name="Rode C.K."/>
            <person name="Mayhew G.F."/>
            <person name="Gregor J."/>
            <person name="Davis N.W."/>
            <person name="Kirkpatrick H.A."/>
            <person name="Goeden M.A."/>
            <person name="Rose D.J."/>
            <person name="Mau B."/>
            <person name="Shao Y."/>
        </authorList>
    </citation>
    <scope>NUCLEOTIDE SEQUENCE [LARGE SCALE GENOMIC DNA]</scope>
    <source>
        <strain>K12 / MG1655 / ATCC 47076</strain>
    </source>
</reference>
<reference key="4">
    <citation type="journal article" date="2006" name="Mol. Syst. Biol.">
        <title>Highly accurate genome sequences of Escherichia coli K-12 strains MG1655 and W3110.</title>
        <authorList>
            <person name="Hayashi K."/>
            <person name="Morooka N."/>
            <person name="Yamamoto Y."/>
            <person name="Fujita K."/>
            <person name="Isono K."/>
            <person name="Choi S."/>
            <person name="Ohtsubo E."/>
            <person name="Baba T."/>
            <person name="Wanner B.L."/>
            <person name="Mori H."/>
            <person name="Horiuchi T."/>
        </authorList>
    </citation>
    <scope>NUCLEOTIDE SEQUENCE [LARGE SCALE GENOMIC DNA]</scope>
    <source>
        <strain>K12 / W3110 / ATCC 27325 / DSM 5911</strain>
    </source>
</reference>
<reference key="5">
    <citation type="journal article" date="2005" name="Science">
        <title>Global topology analysis of the Escherichia coli inner membrane proteome.</title>
        <authorList>
            <person name="Daley D.O."/>
            <person name="Rapp M."/>
            <person name="Granseth E."/>
            <person name="Melen K."/>
            <person name="Drew D."/>
            <person name="von Heijne G."/>
        </authorList>
    </citation>
    <scope>TOPOLOGY [LARGE SCALE ANALYSIS]</scope>
    <scope>SUBCELLULAR LOCATION</scope>
    <source>
        <strain>K12 / MG1655 / ATCC 47076</strain>
    </source>
</reference>
<reference key="6">
    <citation type="journal article" date="2007" name="J. Bacteriol.">
        <title>Docking of the periplasmic FecB binding protein to the FecCD transmembrane proteins in the ferric citrate transport system of Escherichia coli.</title>
        <authorList>
            <person name="Braun V."/>
            <person name="Herrmann C."/>
        </authorList>
    </citation>
    <scope>FUNCTION</scope>
    <scope>INTERACTION WITH FECB</scope>
    <scope>MUTAGENESIS OF ARG-60; ARG-63 AND ARG-302</scope>
    <source>
        <strain>K12</strain>
    </source>
</reference>
<reference key="7">
    <citation type="journal article" date="2009" name="Mol. Cell">
        <title>Hydroxyurea induces hydroxyl radical-mediated cell death in Escherichia coli.</title>
        <authorList>
            <person name="Davies B.W."/>
            <person name="Kohanski M.A."/>
            <person name="Simmons L.A."/>
            <person name="Winkler J.A."/>
            <person name="Collins J.J."/>
            <person name="Walker G.C."/>
        </authorList>
    </citation>
    <scope>INDUCTION BY HYDROXYUREA</scope>
    <source>
        <strain>K12 / MC4100 / ATCC 35695 / DSM 6574</strain>
    </source>
</reference>
<proteinExistence type="evidence at protein level"/>
<gene>
    <name evidence="6" type="primary">fecC</name>
    <name type="ordered locus">b4289</name>
    <name type="ordered locus">JW4249</name>
</gene>
<feature type="chain" id="PRO_0000060020" description="Fe(3+) dicitrate transport system permease protein FecC">
    <location>
        <begin position="1"/>
        <end position="332"/>
    </location>
</feature>
<feature type="topological domain" description="Cytoplasmic" evidence="7">
    <location>
        <begin position="1"/>
        <end position="7"/>
    </location>
</feature>
<feature type="transmembrane region" description="Helical" evidence="1">
    <location>
        <begin position="8"/>
        <end position="28"/>
    </location>
</feature>
<feature type="topological domain" description="Periplasmic" evidence="7">
    <location>
        <begin position="29"/>
        <end position="64"/>
    </location>
</feature>
<feature type="transmembrane region" description="Helical" evidence="1">
    <location>
        <begin position="65"/>
        <end position="85"/>
    </location>
</feature>
<feature type="topological domain" description="Cytoplasmic" evidence="7">
    <location>
        <begin position="86"/>
        <end position="100"/>
    </location>
</feature>
<feature type="transmembrane region" description="Helical" evidence="1">
    <location>
        <begin position="101"/>
        <end position="121"/>
    </location>
</feature>
<feature type="topological domain" description="Periplasmic" evidence="7">
    <location>
        <position position="122"/>
    </location>
</feature>
<feature type="transmembrane region" description="Helical" evidence="1">
    <location>
        <begin position="123"/>
        <end position="143"/>
    </location>
</feature>
<feature type="topological domain" description="Cytoplasmic" evidence="7">
    <location>
        <begin position="144"/>
        <end position="151"/>
    </location>
</feature>
<feature type="transmembrane region" description="Helical" evidence="1">
    <location>
        <begin position="152"/>
        <end position="172"/>
    </location>
</feature>
<feature type="topological domain" description="Periplasmic" evidence="7">
    <location>
        <begin position="173"/>
        <end position="199"/>
    </location>
</feature>
<feature type="transmembrane region" description="Helical" evidence="1">
    <location>
        <begin position="200"/>
        <end position="220"/>
    </location>
</feature>
<feature type="topological domain" description="Cytoplasmic" evidence="7">
    <location>
        <begin position="221"/>
        <end position="244"/>
    </location>
</feature>
<feature type="transmembrane region" description="Helical" evidence="1">
    <location>
        <begin position="245"/>
        <end position="265"/>
    </location>
</feature>
<feature type="topological domain" description="Periplasmic" evidence="7">
    <location>
        <begin position="266"/>
        <end position="307"/>
    </location>
</feature>
<feature type="transmembrane region" description="Helical" evidence="1">
    <location>
        <begin position="308"/>
        <end position="328"/>
    </location>
</feature>
<feature type="topological domain" description="Cytoplasmic" evidence="2">
    <location>
        <begin position="329"/>
        <end position="332"/>
    </location>
</feature>
<feature type="mutagenesis site" description="Retains 33% of wild-type citrate-mediated Fe(3+) transport." evidence="3">
    <original>R</original>
    <variation>C</variation>
    <location>
        <position position="60"/>
    </location>
</feature>
<feature type="mutagenesis site" description="Retains 29% of wild-type citrate-mediated Fe(3+) transport." evidence="3">
    <original>R</original>
    <variation>E</variation>
    <location>
        <position position="60"/>
    </location>
</feature>
<feature type="mutagenesis site" description="Retains 74% of wild-type citrate-mediated Fe(3+) transport." evidence="3">
    <original>R</original>
    <variation>C</variation>
    <location>
        <position position="63"/>
    </location>
</feature>
<feature type="mutagenesis site" description="Retains 30% of wild-type citrate-mediated Fe(3+) transport." evidence="3">
    <original>R</original>
    <variation>E</variation>
    <location>
        <position position="63"/>
    </location>
</feature>
<feature type="mutagenesis site" description="Retains 24% of wild-type citrate-mediated Fe(3+) transport." evidence="3">
    <original>R</original>
    <variation>C</variation>
    <location>
        <position position="302"/>
    </location>
</feature>
<feature type="mutagenesis site" description="Retains 28% of wild-type citrate-mediated Fe(3+) transport." evidence="3">
    <original>R</original>
    <variation>E</variation>
    <location>
        <position position="302"/>
    </location>
</feature>
<feature type="sequence conflict" description="In Ref. 1; AAA23763." evidence="7" ref="1">
    <original>LAMALTSALSPTPIAGYSLSF</original>
    <variation>WLWRYQRAESDADCRLFSVV</variation>
    <location>
        <begin position="103"/>
        <end position="123"/>
    </location>
</feature>
<feature type="sequence conflict" description="In Ref. 1; AAA23763." evidence="7" ref="1">
    <original>A</original>
    <variation>AS</variation>
    <location>
        <position position="178"/>
    </location>
</feature>
<evidence type="ECO:0000255" key="1"/>
<evidence type="ECO:0000269" key="2">
    <source>
    </source>
</evidence>
<evidence type="ECO:0000269" key="3">
    <source>
    </source>
</evidence>
<evidence type="ECO:0000269" key="4">
    <source>
    </source>
</evidence>
<evidence type="ECO:0000269" key="5">
    <source>
    </source>
</evidence>
<evidence type="ECO:0000303" key="6">
    <source>
    </source>
</evidence>
<evidence type="ECO:0000305" key="7"/>
<sequence>MTAIKHPVLLWGLPVAALIIIFWLSLFCYSAIPVSGADATRALLPGHTPTLPEALVQNLRLPRSLVAVLIGASLALAGTLLQTLTHNPMASPSLLGINSGAALAMALTSALSPTPIAGYSLSFIAACGGGVSWLLVMTAGGGFRHTHDRNKLILAGIALSAFCMGLTRITLLLAEDHAYGIFYWLAGGVSHARWQDVWQLLPVVVTAVPVVLLLANQLNLLNLSDSTAHTLGVNLTRLRLVINMLVLLLVGACVSVAGPVAFIGLLVPHLARFWAGFDQRNVLPVSMLLGATLMLLADVLARALAFPGDLPAGAVLALIGSPCFVWLVRRRG</sequence>
<comment type="function">
    <text evidence="3 5 7">Part of the ABC transporter complex FecBCDE involved in citrate-dependent Fe(3+) uptake (PubMed:17660286, PubMed:2651410). Probably responsible for the translocation of the substrate across the membrane (Probable).</text>
</comment>
<comment type="subunit">
    <text evidence="3 5">The complex is composed of two ATP-binding proteins (FecE), two transmembrane proteins (FecC and FecD) and a solute-binding protein (FecB) (PubMed:2651410). Interacts with FecB (PubMed:17660286).</text>
</comment>
<comment type="subcellular location">
    <subcellularLocation>
        <location evidence="2 5">Cell inner membrane</location>
        <topology evidence="1">Multi-pass membrane protein</topology>
    </subcellularLocation>
</comment>
<comment type="induction">
    <text evidence="4">Induced 1.8-fold by hydroxyurea.</text>
</comment>
<comment type="similarity">
    <text evidence="7">Belongs to the binding-protein-dependent transport system permease family. FecCD subfamily.</text>
</comment>
<name>FECC_ECOLI</name>
<accession>P15030</accession>
<accession>Q2M626</accession>
<keyword id="KW-0997">Cell inner membrane</keyword>
<keyword id="KW-1003">Cell membrane</keyword>
<keyword id="KW-0406">Ion transport</keyword>
<keyword id="KW-0408">Iron</keyword>
<keyword id="KW-0410">Iron transport</keyword>
<keyword id="KW-0472">Membrane</keyword>
<keyword id="KW-1185">Reference proteome</keyword>
<keyword id="KW-0812">Transmembrane</keyword>
<keyword id="KW-1133">Transmembrane helix</keyword>
<keyword id="KW-0813">Transport</keyword>
<dbReference type="EMBL" id="M26397">
    <property type="protein sequence ID" value="AAA23763.1"/>
    <property type="molecule type" value="Genomic_DNA"/>
</dbReference>
<dbReference type="EMBL" id="U14003">
    <property type="protein sequence ID" value="AAA97185.1"/>
    <property type="molecule type" value="Genomic_DNA"/>
</dbReference>
<dbReference type="EMBL" id="U00096">
    <property type="protein sequence ID" value="AAC77245.1"/>
    <property type="molecule type" value="Genomic_DNA"/>
</dbReference>
<dbReference type="EMBL" id="AP009048">
    <property type="protein sequence ID" value="BAE78280.1"/>
    <property type="molecule type" value="Genomic_DNA"/>
</dbReference>
<dbReference type="PIR" id="S56514">
    <property type="entry name" value="QRECD1"/>
</dbReference>
<dbReference type="RefSeq" id="NP_418709.1">
    <property type="nucleotide sequence ID" value="NC_000913.3"/>
</dbReference>
<dbReference type="RefSeq" id="WP_000125187.1">
    <property type="nucleotide sequence ID" value="NZ_STEB01000013.1"/>
</dbReference>
<dbReference type="SMR" id="P15030"/>
<dbReference type="BioGRID" id="4262741">
    <property type="interactions" value="360"/>
</dbReference>
<dbReference type="ComplexPortal" id="CPX-4403">
    <property type="entry name" value="Ferric-citrate ABC transporter complex"/>
</dbReference>
<dbReference type="FunCoup" id="P15030">
    <property type="interactions" value="299"/>
</dbReference>
<dbReference type="STRING" id="511145.b4289"/>
<dbReference type="TCDB" id="3.A.1.14.1">
    <property type="family name" value="the atp-binding cassette (abc) superfamily"/>
</dbReference>
<dbReference type="PaxDb" id="511145-b4289"/>
<dbReference type="EnsemblBacteria" id="AAC77245">
    <property type="protein sequence ID" value="AAC77245"/>
    <property type="gene ID" value="b4289"/>
</dbReference>
<dbReference type="GeneID" id="93777542"/>
<dbReference type="GeneID" id="948826"/>
<dbReference type="KEGG" id="ecj:JW4249"/>
<dbReference type="KEGG" id="eco:b4289"/>
<dbReference type="KEGG" id="ecoc:C3026_23130"/>
<dbReference type="PATRIC" id="fig|1411691.4.peg.2410"/>
<dbReference type="EchoBASE" id="EB0284"/>
<dbReference type="eggNOG" id="COG0609">
    <property type="taxonomic scope" value="Bacteria"/>
</dbReference>
<dbReference type="HOGENOM" id="CLU_013016_1_0_6"/>
<dbReference type="InParanoid" id="P15030"/>
<dbReference type="OMA" id="GAPCFVW"/>
<dbReference type="OrthoDB" id="9055647at2"/>
<dbReference type="PhylomeDB" id="P15030"/>
<dbReference type="BioCyc" id="EcoCyc:FECC-MONOMER"/>
<dbReference type="BioCyc" id="MetaCyc:FECC-MONOMER"/>
<dbReference type="PHI-base" id="PHI:11752"/>
<dbReference type="PHI-base" id="PHI:8008"/>
<dbReference type="PRO" id="PR:P15030"/>
<dbReference type="Proteomes" id="UP000000625">
    <property type="component" value="Chromosome"/>
</dbReference>
<dbReference type="GO" id="GO:0055052">
    <property type="term" value="C:ATP-binding cassette (ABC) transporter complex, substrate-binding subunit-containing"/>
    <property type="evidence" value="ECO:0000303"/>
    <property type="project" value="ComplexPortal"/>
</dbReference>
<dbReference type="GO" id="GO:0016020">
    <property type="term" value="C:membrane"/>
    <property type="evidence" value="ECO:0000303"/>
    <property type="project" value="ComplexPortal"/>
</dbReference>
<dbReference type="GO" id="GO:0005886">
    <property type="term" value="C:plasma membrane"/>
    <property type="evidence" value="ECO:0000314"/>
    <property type="project" value="EcoCyc"/>
</dbReference>
<dbReference type="GO" id="GO:0015603">
    <property type="term" value="F:iron chelate transmembrane transporter activity"/>
    <property type="evidence" value="ECO:0000315"/>
    <property type="project" value="EcoCyc"/>
</dbReference>
<dbReference type="GO" id="GO:0022857">
    <property type="term" value="F:transmembrane transporter activity"/>
    <property type="evidence" value="ECO:0000318"/>
    <property type="project" value="GO_Central"/>
</dbReference>
<dbReference type="GO" id="GO:0006879">
    <property type="term" value="P:intracellular iron ion homeostasis"/>
    <property type="evidence" value="ECO:0000303"/>
    <property type="project" value="ComplexPortal"/>
</dbReference>
<dbReference type="GO" id="GO:0033212">
    <property type="term" value="P:iron import into cell"/>
    <property type="evidence" value="ECO:0000303"/>
    <property type="project" value="ComplexPortal"/>
</dbReference>
<dbReference type="GO" id="GO:0033214">
    <property type="term" value="P:siderophore-dependent iron import into cell"/>
    <property type="evidence" value="ECO:0000315"/>
    <property type="project" value="EcoCyc"/>
</dbReference>
<dbReference type="CDD" id="cd06550">
    <property type="entry name" value="TM_ABC_iron-siderophores_like"/>
    <property type="match status" value="1"/>
</dbReference>
<dbReference type="FunFam" id="1.10.3470.10:FF:000009">
    <property type="entry name" value="Fe(3+) dicitrate transport system permease fecC"/>
    <property type="match status" value="1"/>
</dbReference>
<dbReference type="Gene3D" id="1.10.3470.10">
    <property type="entry name" value="ABC transporter involved in vitamin B12 uptake, BtuC"/>
    <property type="match status" value="1"/>
</dbReference>
<dbReference type="InterPro" id="IPR037294">
    <property type="entry name" value="ABC_BtuC-like"/>
</dbReference>
<dbReference type="InterPro" id="IPR000522">
    <property type="entry name" value="ABC_transptr_permease_BtuC"/>
</dbReference>
<dbReference type="NCBIfam" id="NF008407">
    <property type="entry name" value="PRK11228.1"/>
    <property type="match status" value="1"/>
</dbReference>
<dbReference type="PANTHER" id="PTHR30472:SF1">
    <property type="entry name" value="FE(3+) DICITRATE TRANSPORT SYSTEM PERMEASE PROTEIN FECC-RELATED"/>
    <property type="match status" value="1"/>
</dbReference>
<dbReference type="PANTHER" id="PTHR30472">
    <property type="entry name" value="FERRIC ENTEROBACTIN TRANSPORT SYSTEM PERMEASE PROTEIN"/>
    <property type="match status" value="1"/>
</dbReference>
<dbReference type="Pfam" id="PF01032">
    <property type="entry name" value="FecCD"/>
    <property type="match status" value="1"/>
</dbReference>
<dbReference type="SUPFAM" id="SSF81345">
    <property type="entry name" value="ABC transporter involved in vitamin B12 uptake, BtuC"/>
    <property type="match status" value="1"/>
</dbReference>
<organism>
    <name type="scientific">Escherichia coli (strain K12)</name>
    <dbReference type="NCBI Taxonomy" id="83333"/>
    <lineage>
        <taxon>Bacteria</taxon>
        <taxon>Pseudomonadati</taxon>
        <taxon>Pseudomonadota</taxon>
        <taxon>Gammaproteobacteria</taxon>
        <taxon>Enterobacterales</taxon>
        <taxon>Enterobacteriaceae</taxon>
        <taxon>Escherichia</taxon>
    </lineage>
</organism>
<protein>
    <recommendedName>
        <fullName evidence="7">Fe(3+) dicitrate transport system permease protein FecC</fullName>
    </recommendedName>
    <alternativeName>
        <fullName>Iron(III) dicitrate transport system permease protein FecC</fullName>
    </alternativeName>
</protein>